<organism>
    <name type="scientific">Oryza sativa subsp. japonica</name>
    <name type="common">Rice</name>
    <dbReference type="NCBI Taxonomy" id="39947"/>
    <lineage>
        <taxon>Eukaryota</taxon>
        <taxon>Viridiplantae</taxon>
        <taxon>Streptophyta</taxon>
        <taxon>Embryophyta</taxon>
        <taxon>Tracheophyta</taxon>
        <taxon>Spermatophyta</taxon>
        <taxon>Magnoliopsida</taxon>
        <taxon>Liliopsida</taxon>
        <taxon>Poales</taxon>
        <taxon>Poaceae</taxon>
        <taxon>BOP clade</taxon>
        <taxon>Oryzoideae</taxon>
        <taxon>Oryzeae</taxon>
        <taxon>Oryzinae</taxon>
        <taxon>Oryza</taxon>
        <taxon>Oryza sativa</taxon>
    </lineage>
</organism>
<proteinExistence type="evidence at transcript level"/>
<gene>
    <name type="ordered locus">Os04g0350100</name>
    <name type="ordered locus">LOC_Os04g28250</name>
    <name type="ORF">OSJNBa0038P21.11</name>
</gene>
<keyword id="KW-0611">Plant defense</keyword>
<keyword id="KW-0646">Protease inhibitor</keyword>
<keyword id="KW-1185">Reference proteome</keyword>
<keyword id="KW-0964">Secreted</keyword>
<keyword id="KW-0732">Signal</keyword>
<keyword id="KW-0789">Thiol protease inhibitor</keyword>
<name>CYT10_ORYSJ</name>
<accession>P0C579</accession>
<accession>B7E949</accession>
<accession>Q0JDZ3</accession>
<accession>Q7XKS0</accession>
<comment type="function">
    <text evidence="1">Specific inhibitor of cysteine proteinases. Probably involved in the regulation of endogenous processes and in defense against pests and pathogens (By similarity).</text>
</comment>
<comment type="subcellular location">
    <subcellularLocation>
        <location evidence="3">Secreted</location>
    </subcellularLocation>
</comment>
<comment type="similarity">
    <text evidence="3">Belongs to the cystatin family. Phytocystatin subfamily.</text>
</comment>
<protein>
    <recommendedName>
        <fullName>Cysteine proteinase inhibitor 10</fullName>
    </recommendedName>
    <alternativeName>
        <fullName>Oryzacystatin X</fullName>
        <shortName>OC-X</shortName>
    </alternativeName>
    <alternativeName>
        <fullName>Oryzacystatin-10</fullName>
    </alternativeName>
</protein>
<sequence>MATSPMLFLVSLLLVLVAAATGDEASPSNAAAPAAPVLVGGRTEIRDVGSNKAVQSLGRFAVAEHNRRLRHGGSGGPADPVPVKLAFARVVEAQKQVVSGVAYYLKVAASARDPRGGAAAGGDRVFDAVVVVKAWLKSKELVSFTPASSTK</sequence>
<reference key="1">
    <citation type="journal article" date="2002" name="Nature">
        <title>Sequence and analysis of rice chromosome 4.</title>
        <authorList>
            <person name="Feng Q."/>
            <person name="Zhang Y."/>
            <person name="Hao P."/>
            <person name="Wang S."/>
            <person name="Fu G."/>
            <person name="Huang Y."/>
            <person name="Li Y."/>
            <person name="Zhu J."/>
            <person name="Liu Y."/>
            <person name="Hu X."/>
            <person name="Jia P."/>
            <person name="Zhang Y."/>
            <person name="Zhao Q."/>
            <person name="Ying K."/>
            <person name="Yu S."/>
            <person name="Tang Y."/>
            <person name="Weng Q."/>
            <person name="Zhang L."/>
            <person name="Lu Y."/>
            <person name="Mu J."/>
            <person name="Lu Y."/>
            <person name="Zhang L.S."/>
            <person name="Yu Z."/>
            <person name="Fan D."/>
            <person name="Liu X."/>
            <person name="Lu T."/>
            <person name="Li C."/>
            <person name="Wu Y."/>
            <person name="Sun T."/>
            <person name="Lei H."/>
            <person name="Li T."/>
            <person name="Hu H."/>
            <person name="Guan J."/>
            <person name="Wu M."/>
            <person name="Zhang R."/>
            <person name="Zhou B."/>
            <person name="Chen Z."/>
            <person name="Chen L."/>
            <person name="Jin Z."/>
            <person name="Wang R."/>
            <person name="Yin H."/>
            <person name="Cai Z."/>
            <person name="Ren S."/>
            <person name="Lv G."/>
            <person name="Gu W."/>
            <person name="Zhu G."/>
            <person name="Tu Y."/>
            <person name="Jia J."/>
            <person name="Zhang Y."/>
            <person name="Chen J."/>
            <person name="Kang H."/>
            <person name="Chen X."/>
            <person name="Shao C."/>
            <person name="Sun Y."/>
            <person name="Hu Q."/>
            <person name="Zhang X."/>
            <person name="Zhang W."/>
            <person name="Wang L."/>
            <person name="Ding C."/>
            <person name="Sheng H."/>
            <person name="Gu J."/>
            <person name="Chen S."/>
            <person name="Ni L."/>
            <person name="Zhu F."/>
            <person name="Chen W."/>
            <person name="Lan L."/>
            <person name="Lai Y."/>
            <person name="Cheng Z."/>
            <person name="Gu M."/>
            <person name="Jiang J."/>
            <person name="Li J."/>
            <person name="Hong G."/>
            <person name="Xue Y."/>
            <person name="Han B."/>
        </authorList>
    </citation>
    <scope>NUCLEOTIDE SEQUENCE [LARGE SCALE GENOMIC DNA]</scope>
    <source>
        <strain>cv. Nipponbare</strain>
    </source>
</reference>
<reference key="2">
    <citation type="journal article" date="2005" name="Nature">
        <title>The map-based sequence of the rice genome.</title>
        <authorList>
            <consortium name="International rice genome sequencing project (IRGSP)"/>
        </authorList>
    </citation>
    <scope>NUCLEOTIDE SEQUENCE [LARGE SCALE GENOMIC DNA]</scope>
    <source>
        <strain>cv. Nipponbare</strain>
    </source>
</reference>
<reference key="3">
    <citation type="journal article" date="2008" name="Nucleic Acids Res.">
        <title>The rice annotation project database (RAP-DB): 2008 update.</title>
        <authorList>
            <consortium name="The rice annotation project (RAP)"/>
        </authorList>
    </citation>
    <scope>GENOME REANNOTATION</scope>
    <source>
        <strain>cv. Nipponbare</strain>
    </source>
</reference>
<reference key="4">
    <citation type="journal article" date="2013" name="Rice">
        <title>Improvement of the Oryza sativa Nipponbare reference genome using next generation sequence and optical map data.</title>
        <authorList>
            <person name="Kawahara Y."/>
            <person name="de la Bastide M."/>
            <person name="Hamilton J.P."/>
            <person name="Kanamori H."/>
            <person name="McCombie W.R."/>
            <person name="Ouyang S."/>
            <person name="Schwartz D.C."/>
            <person name="Tanaka T."/>
            <person name="Wu J."/>
            <person name="Zhou S."/>
            <person name="Childs K.L."/>
            <person name="Davidson R.M."/>
            <person name="Lin H."/>
            <person name="Quesada-Ocampo L."/>
            <person name="Vaillancourt B."/>
            <person name="Sakai H."/>
            <person name="Lee S.S."/>
            <person name="Kim J."/>
            <person name="Numa H."/>
            <person name="Itoh T."/>
            <person name="Buell C.R."/>
            <person name="Matsumoto T."/>
        </authorList>
    </citation>
    <scope>GENOME REANNOTATION</scope>
    <source>
        <strain>cv. Nipponbare</strain>
    </source>
</reference>
<reference key="5">
    <citation type="journal article" date="2003" name="Science">
        <title>Collection, mapping, and annotation of over 28,000 cDNA clones from japonica rice.</title>
        <authorList>
            <consortium name="The rice full-length cDNA consortium"/>
        </authorList>
    </citation>
    <scope>NUCLEOTIDE SEQUENCE [LARGE SCALE MRNA]</scope>
    <source>
        <strain>cv. Nipponbare</strain>
    </source>
</reference>
<reference key="6">
    <citation type="journal article" date="2005" name="Mol. Genet. Genomics">
        <title>Comparative phylogenetic analysis of cystatin gene families from arabidopsis, rice and barley.</title>
        <authorList>
            <person name="Martinez M."/>
            <person name="Abraham Z."/>
            <person name="Carbonero P."/>
            <person name="Diaz I."/>
        </authorList>
    </citation>
    <scope>GENE FAMILY</scope>
</reference>
<feature type="signal peptide" evidence="2">
    <location>
        <begin position="1"/>
        <end position="22"/>
    </location>
</feature>
<feature type="chain" id="PRO_0000277507" description="Cysteine proteinase inhibitor 10">
    <location>
        <begin position="23"/>
        <end position="151"/>
    </location>
</feature>
<feature type="domain" description="Cystatin">
    <location>
        <begin position="40"/>
        <end position="109"/>
    </location>
</feature>
<feature type="short sequence motif" description="Secondary area of contact" evidence="1">
    <location>
        <begin position="96"/>
        <end position="100"/>
    </location>
</feature>
<feature type="site" description="Reactive site" evidence="1">
    <location>
        <position position="40"/>
    </location>
</feature>
<evidence type="ECO:0000250" key="1"/>
<evidence type="ECO:0000255" key="2"/>
<evidence type="ECO:0000305" key="3"/>
<dbReference type="EMBL" id="AL731588">
    <property type="protein sequence ID" value="CAE05518.1"/>
    <property type="molecule type" value="Genomic_DNA"/>
</dbReference>
<dbReference type="EMBL" id="AP008210">
    <property type="protein sequence ID" value="BAF14444.1"/>
    <property type="molecule type" value="Genomic_DNA"/>
</dbReference>
<dbReference type="EMBL" id="AP014960">
    <property type="protein sequence ID" value="BAS88722.1"/>
    <property type="molecule type" value="Genomic_DNA"/>
</dbReference>
<dbReference type="EMBL" id="AK063869">
    <property type="protein sequence ID" value="BAG88896.1"/>
    <property type="molecule type" value="mRNA"/>
</dbReference>
<dbReference type="EMBL" id="AK102139">
    <property type="protein sequence ID" value="BAG95408.1"/>
    <property type="molecule type" value="mRNA"/>
</dbReference>
<dbReference type="RefSeq" id="XP_015635666.1">
    <property type="nucleotide sequence ID" value="XM_015780180.1"/>
</dbReference>
<dbReference type="SMR" id="P0C579"/>
<dbReference type="FunCoup" id="P0C579">
    <property type="interactions" value="130"/>
</dbReference>
<dbReference type="STRING" id="39947.P0C579"/>
<dbReference type="MEROPS" id="I25.057"/>
<dbReference type="PaxDb" id="39947-P0C579"/>
<dbReference type="EnsemblPlants" id="Os04t0350100-01">
    <property type="protein sequence ID" value="Os04t0350100-01"/>
    <property type="gene ID" value="Os04g0350100"/>
</dbReference>
<dbReference type="Gramene" id="Os04t0350100-01">
    <property type="protein sequence ID" value="Os04t0350100-01"/>
    <property type="gene ID" value="Os04g0350100"/>
</dbReference>
<dbReference type="KEGG" id="dosa:Os04g0350100"/>
<dbReference type="eggNOG" id="ENOG502S4YZ">
    <property type="taxonomic scope" value="Eukaryota"/>
</dbReference>
<dbReference type="HOGENOM" id="CLU_113093_0_1_1"/>
<dbReference type="InParanoid" id="P0C579"/>
<dbReference type="OMA" id="RMVTITS"/>
<dbReference type="OrthoDB" id="1908104at2759"/>
<dbReference type="Proteomes" id="UP000000763">
    <property type="component" value="Chromosome 4"/>
</dbReference>
<dbReference type="Proteomes" id="UP000059680">
    <property type="component" value="Chromosome 4"/>
</dbReference>
<dbReference type="GO" id="GO:0005576">
    <property type="term" value="C:extracellular region"/>
    <property type="evidence" value="ECO:0007669"/>
    <property type="project" value="UniProtKB-SubCell"/>
</dbReference>
<dbReference type="GO" id="GO:0004869">
    <property type="term" value="F:cysteine-type endopeptidase inhibitor activity"/>
    <property type="evidence" value="ECO:0007669"/>
    <property type="project" value="UniProtKB-KW"/>
</dbReference>
<dbReference type="GO" id="GO:0006952">
    <property type="term" value="P:defense response"/>
    <property type="evidence" value="ECO:0007669"/>
    <property type="project" value="UniProtKB-KW"/>
</dbReference>
<dbReference type="CDD" id="cd00042">
    <property type="entry name" value="CY"/>
    <property type="match status" value="1"/>
</dbReference>
<dbReference type="Gene3D" id="3.10.450.10">
    <property type="match status" value="1"/>
</dbReference>
<dbReference type="InterPro" id="IPR000010">
    <property type="entry name" value="Cystatin_dom"/>
</dbReference>
<dbReference type="InterPro" id="IPR046350">
    <property type="entry name" value="Cystatin_sf"/>
</dbReference>
<dbReference type="PANTHER" id="PTHR47373:SF2">
    <property type="entry name" value="CYSTEINE PROTEINASE INHIBITOR 10"/>
    <property type="match status" value="1"/>
</dbReference>
<dbReference type="PANTHER" id="PTHR47373">
    <property type="entry name" value="CYSTEINE PROTEINASE INHIBITOR 2"/>
    <property type="match status" value="1"/>
</dbReference>
<dbReference type="Pfam" id="PF16845">
    <property type="entry name" value="SQAPI"/>
    <property type="match status" value="1"/>
</dbReference>
<dbReference type="SMART" id="SM00043">
    <property type="entry name" value="CY"/>
    <property type="match status" value="1"/>
</dbReference>
<dbReference type="SUPFAM" id="SSF54403">
    <property type="entry name" value="Cystatin/monellin"/>
    <property type="match status" value="1"/>
</dbReference>